<reference key="1">
    <citation type="submission" date="2003-06" db="EMBL/GenBank/DDBJ databases">
        <title>Intact mutS gene in laboratory-derived and clinical glycopeptide-intermediate Staphylococcus aureus strains.</title>
        <authorList>
            <person name="Muthaiyan A."/>
            <person name="Jayaswal R.K."/>
            <person name="Wilkinson B.J."/>
        </authorList>
    </citation>
    <scope>NUCLEOTIDE SEQUENCE [GENOMIC DNA]</scope>
    <source>
        <strain>13136p-m+</strain>
        <strain>13136p-m+V20</strain>
        <strain>13136p-m+V5</strain>
        <strain>BB270V15</strain>
        <strain>BB399V12</strain>
        <strain>BB568V15</strain>
        <strain>COLV10</strain>
        <strain>COLV5</strain>
        <strain>HIP5827</strain>
        <strain>HIP5836</strain>
    </source>
</reference>
<evidence type="ECO:0000250" key="1"/>
<evidence type="ECO:0000255" key="2"/>
<evidence type="ECO:0000305" key="3"/>
<accession>P0C1S1</accession>
<accession>Q7WRG7</accession>
<accession>Q7WYI7</accession>
<accession>Q932P9</accession>
<keyword id="KW-0067">ATP-binding</keyword>
<keyword id="KW-0227">DNA damage</keyword>
<keyword id="KW-0234">DNA repair</keyword>
<keyword id="KW-0238">DNA-binding</keyword>
<keyword id="KW-0547">Nucleotide-binding</keyword>
<proteinExistence type="inferred from homology"/>
<organism>
    <name type="scientific">Staphylococcus aureus</name>
    <dbReference type="NCBI Taxonomy" id="1280"/>
    <lineage>
        <taxon>Bacteria</taxon>
        <taxon>Bacillati</taxon>
        <taxon>Bacillota</taxon>
        <taxon>Bacilli</taxon>
        <taxon>Bacillales</taxon>
        <taxon>Staphylococcaceae</taxon>
        <taxon>Staphylococcus</taxon>
    </lineage>
</organism>
<gene>
    <name type="primary">mutS</name>
</gene>
<sequence length="872" mass="99904">MSNVTPMMQQYLKIKSEYQDCLLFFRLGDFYEMFYEDAKEASRVLEITLTKRDAKKENPIPMCGVPYHSADSYIDTLVNNGYKVAICEQMEDPKQTKGMVRREVVRIVTPGTVMEQGGVDDKQNNYILSFVMNQPEIALSYCDVSTGELKVTHFNDEATLLNEITTINPNEVVINDNISDNLKRQINMVTETITVRETLSSEIYSVNQTEHKLMYQATQLLLDYIHHTQKRDLSHIEDVVQYAAIDYMKMDFYAKRNLELTESIRLKSKKGTLLWLMDETKTPMGARRLKQWIDRPLISKEQIEARLDIVDEFSAHFIERDTLRTYLNQVYDIERLVGRVSYGNVNARDLIQLKHSISEIPNIKALLNSMNQNTLVQVNQLEPLDDLLDILEQSLVEEPPISVKDGGLFKVGFNTQLDEYLEASKNGKTWLAELQAKERQRTGIKSLKISFNKVFGYFIEITRANLQNFEPSEFGYMRKQTLSNAERFITDELKEKEDIILGAEDKAIELEYQLFVQLREEVKKYTERLQQQAKIISELDCLQSFAEIAQKYNYTRPSFSENKTLELVESRHPVVERVMDYNDYVPNNCRLDNETFIYLITGPNMSGKSTYMRQVAIISIMAQMGAYVPCKEAVLPIFDQIFTRIGAADDLVSGKSTFMVEMLEAQKALTYATEDSLIIFDEIGRGTSTYDGLALAQAMIEYVAETSHAKTLFSTHYHELTTLDQALPSLKNVHVAANEYKGELIFLHKVKDGAVDDSYGIQVAKLADLPEKVISRAQVILSEFEASAGKKSSISNLKMVENEPEINQENLNLSVEETTDTLSQKDFEQASFDLFENDQESEIELQIKNLNLSNMTPIEALVKLSELQNQLK</sequence>
<protein>
    <recommendedName>
        <fullName>DNA mismatch repair protein MutS</fullName>
    </recommendedName>
</protein>
<feature type="chain" id="PRO_0000115141" description="DNA mismatch repair protein MutS">
    <location>
        <begin position="1"/>
        <end position="872"/>
    </location>
</feature>
<feature type="binding site" evidence="2">
    <location>
        <begin position="602"/>
        <end position="609"/>
    </location>
    <ligand>
        <name>ATP</name>
        <dbReference type="ChEBI" id="CHEBI:30616"/>
    </ligand>
</feature>
<feature type="sequence variant" description="In strain: BB399V12.">
    <original>T</original>
    <variation>P</variation>
    <location>
        <position position="706"/>
    </location>
</feature>
<feature type="sequence variant" description="In strain: BB270V15.">
    <original>E</original>
    <variation>K</variation>
    <location>
        <position position="840"/>
    </location>
</feature>
<name>MUTS_STAAU</name>
<dbReference type="EMBL" id="AY324088">
    <property type="protein sequence ID" value="AAP87083.1"/>
    <property type="molecule type" value="Genomic_DNA"/>
</dbReference>
<dbReference type="EMBL" id="AY324089">
    <property type="protein sequence ID" value="AAP87084.1"/>
    <property type="molecule type" value="Genomic_DNA"/>
</dbReference>
<dbReference type="EMBL" id="AY324090">
    <property type="protein sequence ID" value="AAP87085.1"/>
    <property type="molecule type" value="Genomic_DNA"/>
</dbReference>
<dbReference type="EMBL" id="AY324091">
    <property type="protein sequence ID" value="AAP87086.1"/>
    <property type="molecule type" value="Genomic_DNA"/>
</dbReference>
<dbReference type="EMBL" id="AY324092">
    <property type="protein sequence ID" value="AAP87087.1"/>
    <property type="molecule type" value="Genomic_DNA"/>
</dbReference>
<dbReference type="EMBL" id="AY324093">
    <property type="protein sequence ID" value="AAP87088.1"/>
    <property type="molecule type" value="Genomic_DNA"/>
</dbReference>
<dbReference type="EMBL" id="AY324094">
    <property type="protein sequence ID" value="AAP87089.1"/>
    <property type="molecule type" value="Genomic_DNA"/>
</dbReference>
<dbReference type="EMBL" id="AY324095">
    <property type="protein sequence ID" value="AAP87090.1"/>
    <property type="molecule type" value="Genomic_DNA"/>
</dbReference>
<dbReference type="EMBL" id="AY324096">
    <property type="protein sequence ID" value="AAP87091.1"/>
    <property type="molecule type" value="Genomic_DNA"/>
</dbReference>
<dbReference type="EMBL" id="AY324097">
    <property type="protein sequence ID" value="AAP87092.1"/>
    <property type="molecule type" value="Genomic_DNA"/>
</dbReference>
<dbReference type="RefSeq" id="WP_000073352.1">
    <property type="nucleotide sequence ID" value="NZ_WYDB01000002.1"/>
</dbReference>
<dbReference type="RefSeq" id="WP_000073353.1">
    <property type="nucleotide sequence ID" value="NZ_WWFR01000003.1"/>
</dbReference>
<dbReference type="SMR" id="P0C1S1"/>
<dbReference type="OMA" id="TPMMAQY"/>
<dbReference type="GO" id="GO:0005829">
    <property type="term" value="C:cytosol"/>
    <property type="evidence" value="ECO:0007669"/>
    <property type="project" value="TreeGrafter"/>
</dbReference>
<dbReference type="GO" id="GO:0005524">
    <property type="term" value="F:ATP binding"/>
    <property type="evidence" value="ECO:0007669"/>
    <property type="project" value="UniProtKB-UniRule"/>
</dbReference>
<dbReference type="GO" id="GO:0140664">
    <property type="term" value="F:ATP-dependent DNA damage sensor activity"/>
    <property type="evidence" value="ECO:0007669"/>
    <property type="project" value="InterPro"/>
</dbReference>
<dbReference type="GO" id="GO:0003684">
    <property type="term" value="F:damaged DNA binding"/>
    <property type="evidence" value="ECO:0007669"/>
    <property type="project" value="UniProtKB-UniRule"/>
</dbReference>
<dbReference type="GO" id="GO:0030983">
    <property type="term" value="F:mismatched DNA binding"/>
    <property type="evidence" value="ECO:0007669"/>
    <property type="project" value="InterPro"/>
</dbReference>
<dbReference type="GO" id="GO:0006298">
    <property type="term" value="P:mismatch repair"/>
    <property type="evidence" value="ECO:0007669"/>
    <property type="project" value="UniProtKB-UniRule"/>
</dbReference>
<dbReference type="CDD" id="cd03284">
    <property type="entry name" value="ABC_MutS1"/>
    <property type="match status" value="1"/>
</dbReference>
<dbReference type="FunFam" id="1.10.1420.10:FF:000007">
    <property type="entry name" value="DNA mismatch repair protein MutS"/>
    <property type="match status" value="1"/>
</dbReference>
<dbReference type="FunFam" id="3.40.1170.10:FF:000001">
    <property type="entry name" value="DNA mismatch repair protein MutS"/>
    <property type="match status" value="1"/>
</dbReference>
<dbReference type="FunFam" id="3.40.50.300:FF:000896">
    <property type="entry name" value="DNA mismatch repair protein MutS"/>
    <property type="match status" value="1"/>
</dbReference>
<dbReference type="Gene3D" id="1.10.1420.10">
    <property type="match status" value="2"/>
</dbReference>
<dbReference type="Gene3D" id="3.40.1170.10">
    <property type="entry name" value="DNA repair protein MutS, domain I"/>
    <property type="match status" value="1"/>
</dbReference>
<dbReference type="Gene3D" id="3.30.420.110">
    <property type="entry name" value="MutS, connector domain"/>
    <property type="match status" value="1"/>
</dbReference>
<dbReference type="Gene3D" id="3.40.50.300">
    <property type="entry name" value="P-loop containing nucleotide triphosphate hydrolases"/>
    <property type="match status" value="1"/>
</dbReference>
<dbReference type="HAMAP" id="MF_00096">
    <property type="entry name" value="MutS"/>
    <property type="match status" value="1"/>
</dbReference>
<dbReference type="InterPro" id="IPR005748">
    <property type="entry name" value="DNA_mismatch_repair_MutS"/>
</dbReference>
<dbReference type="InterPro" id="IPR007695">
    <property type="entry name" value="DNA_mismatch_repair_MutS-lik_N"/>
</dbReference>
<dbReference type="InterPro" id="IPR017261">
    <property type="entry name" value="DNA_mismatch_repair_MutS/MSH"/>
</dbReference>
<dbReference type="InterPro" id="IPR000432">
    <property type="entry name" value="DNA_mismatch_repair_MutS_C"/>
</dbReference>
<dbReference type="InterPro" id="IPR007861">
    <property type="entry name" value="DNA_mismatch_repair_MutS_clamp"/>
</dbReference>
<dbReference type="InterPro" id="IPR007696">
    <property type="entry name" value="DNA_mismatch_repair_MutS_core"/>
</dbReference>
<dbReference type="InterPro" id="IPR016151">
    <property type="entry name" value="DNA_mismatch_repair_MutS_N"/>
</dbReference>
<dbReference type="InterPro" id="IPR036187">
    <property type="entry name" value="DNA_mismatch_repair_MutS_sf"/>
</dbReference>
<dbReference type="InterPro" id="IPR007860">
    <property type="entry name" value="DNA_mmatch_repair_MutS_con_dom"/>
</dbReference>
<dbReference type="InterPro" id="IPR045076">
    <property type="entry name" value="MutS"/>
</dbReference>
<dbReference type="InterPro" id="IPR036678">
    <property type="entry name" value="MutS_con_dom_sf"/>
</dbReference>
<dbReference type="InterPro" id="IPR027417">
    <property type="entry name" value="P-loop_NTPase"/>
</dbReference>
<dbReference type="NCBIfam" id="TIGR01070">
    <property type="entry name" value="mutS1"/>
    <property type="match status" value="1"/>
</dbReference>
<dbReference type="NCBIfam" id="NF003810">
    <property type="entry name" value="PRK05399.1"/>
    <property type="match status" value="1"/>
</dbReference>
<dbReference type="PANTHER" id="PTHR11361:SF34">
    <property type="entry name" value="DNA MISMATCH REPAIR PROTEIN MSH1, MITOCHONDRIAL"/>
    <property type="match status" value="1"/>
</dbReference>
<dbReference type="PANTHER" id="PTHR11361">
    <property type="entry name" value="DNA MISMATCH REPAIR PROTEIN MUTS FAMILY MEMBER"/>
    <property type="match status" value="1"/>
</dbReference>
<dbReference type="Pfam" id="PF01624">
    <property type="entry name" value="MutS_I"/>
    <property type="match status" value="1"/>
</dbReference>
<dbReference type="Pfam" id="PF05188">
    <property type="entry name" value="MutS_II"/>
    <property type="match status" value="1"/>
</dbReference>
<dbReference type="Pfam" id="PF05192">
    <property type="entry name" value="MutS_III"/>
    <property type="match status" value="1"/>
</dbReference>
<dbReference type="Pfam" id="PF05190">
    <property type="entry name" value="MutS_IV"/>
    <property type="match status" value="1"/>
</dbReference>
<dbReference type="Pfam" id="PF00488">
    <property type="entry name" value="MutS_V"/>
    <property type="match status" value="1"/>
</dbReference>
<dbReference type="PIRSF" id="PIRSF037677">
    <property type="entry name" value="DNA_mis_repair_Msh6"/>
    <property type="match status" value="1"/>
</dbReference>
<dbReference type="SMART" id="SM00534">
    <property type="entry name" value="MUTSac"/>
    <property type="match status" value="1"/>
</dbReference>
<dbReference type="SMART" id="SM00533">
    <property type="entry name" value="MUTSd"/>
    <property type="match status" value="1"/>
</dbReference>
<dbReference type="SUPFAM" id="SSF55271">
    <property type="entry name" value="DNA repair protein MutS, domain I"/>
    <property type="match status" value="1"/>
</dbReference>
<dbReference type="SUPFAM" id="SSF53150">
    <property type="entry name" value="DNA repair protein MutS, domain II"/>
    <property type="match status" value="1"/>
</dbReference>
<dbReference type="SUPFAM" id="SSF48334">
    <property type="entry name" value="DNA repair protein MutS, domain III"/>
    <property type="match status" value="1"/>
</dbReference>
<dbReference type="SUPFAM" id="SSF52540">
    <property type="entry name" value="P-loop containing nucleoside triphosphate hydrolases"/>
    <property type="match status" value="1"/>
</dbReference>
<dbReference type="PROSITE" id="PS00486">
    <property type="entry name" value="DNA_MISMATCH_REPAIR_2"/>
    <property type="match status" value="1"/>
</dbReference>
<comment type="function">
    <text evidence="1">This protein is involved in the repair of mismatches in DNA. It is possible that it carries out the mismatch recognition step. This protein has a weak ATPase activity (By similarity).</text>
</comment>
<comment type="similarity">
    <text evidence="3">Belongs to the DNA mismatch repair MutS family.</text>
</comment>